<protein>
    <recommendedName>
        <fullName evidence="1">Imidazole glycerol phosphate synthase subunit HisH</fullName>
        <ecNumber evidence="1">4.3.2.10</ecNumber>
    </recommendedName>
    <alternativeName>
        <fullName evidence="1">IGP synthase glutaminase subunit</fullName>
        <ecNumber evidence="1">3.5.1.2</ecNumber>
    </alternativeName>
    <alternativeName>
        <fullName evidence="1">IGP synthase subunit HisH</fullName>
    </alternativeName>
    <alternativeName>
        <fullName evidence="1">ImGP synthase subunit HisH</fullName>
        <shortName evidence="1">IGPS subunit HisH</shortName>
    </alternativeName>
</protein>
<feature type="chain" id="PRO_0000152422" description="Imidazole glycerol phosphate synthase subunit HisH">
    <location>
        <begin position="1"/>
        <end position="192"/>
    </location>
</feature>
<feature type="domain" description="Glutamine amidotransferase type-1" evidence="1">
    <location>
        <begin position="1"/>
        <end position="192"/>
    </location>
</feature>
<feature type="active site" description="Nucleophile" evidence="1">
    <location>
        <position position="77"/>
    </location>
</feature>
<feature type="active site" evidence="1">
    <location>
        <position position="169"/>
    </location>
</feature>
<feature type="active site" evidence="1">
    <location>
        <position position="171"/>
    </location>
</feature>
<gene>
    <name evidence="1" type="primary">hisH</name>
    <name type="ordered locus">SACOL2699</name>
</gene>
<accession>Q5HCM2</accession>
<dbReference type="EC" id="4.3.2.10" evidence="1"/>
<dbReference type="EC" id="3.5.1.2" evidence="1"/>
<dbReference type="EMBL" id="CP000046">
    <property type="protein sequence ID" value="AAW37347.1"/>
    <property type="molecule type" value="Genomic_DNA"/>
</dbReference>
<dbReference type="RefSeq" id="WP_000635623.1">
    <property type="nucleotide sequence ID" value="NZ_JBGOFO010000001.1"/>
</dbReference>
<dbReference type="SMR" id="Q5HCM2"/>
<dbReference type="KEGG" id="sac:SACOL2699"/>
<dbReference type="HOGENOM" id="CLU_071837_2_2_9"/>
<dbReference type="UniPathway" id="UPA00031">
    <property type="reaction ID" value="UER00010"/>
</dbReference>
<dbReference type="Proteomes" id="UP000000530">
    <property type="component" value="Chromosome"/>
</dbReference>
<dbReference type="GO" id="GO:0005737">
    <property type="term" value="C:cytoplasm"/>
    <property type="evidence" value="ECO:0007669"/>
    <property type="project" value="UniProtKB-SubCell"/>
</dbReference>
<dbReference type="GO" id="GO:0004359">
    <property type="term" value="F:glutaminase activity"/>
    <property type="evidence" value="ECO:0007669"/>
    <property type="project" value="UniProtKB-EC"/>
</dbReference>
<dbReference type="GO" id="GO:0000107">
    <property type="term" value="F:imidazoleglycerol-phosphate synthase activity"/>
    <property type="evidence" value="ECO:0007669"/>
    <property type="project" value="UniProtKB-UniRule"/>
</dbReference>
<dbReference type="GO" id="GO:0016829">
    <property type="term" value="F:lyase activity"/>
    <property type="evidence" value="ECO:0007669"/>
    <property type="project" value="UniProtKB-KW"/>
</dbReference>
<dbReference type="GO" id="GO:0000105">
    <property type="term" value="P:L-histidine biosynthetic process"/>
    <property type="evidence" value="ECO:0007669"/>
    <property type="project" value="UniProtKB-UniRule"/>
</dbReference>
<dbReference type="CDD" id="cd01748">
    <property type="entry name" value="GATase1_IGP_Synthase"/>
    <property type="match status" value="1"/>
</dbReference>
<dbReference type="FunFam" id="3.40.50.880:FF:000064">
    <property type="entry name" value="Imidazole glycerol phosphate synthase subunit HisH"/>
    <property type="match status" value="1"/>
</dbReference>
<dbReference type="Gene3D" id="3.40.50.880">
    <property type="match status" value="1"/>
</dbReference>
<dbReference type="HAMAP" id="MF_00278">
    <property type="entry name" value="HisH"/>
    <property type="match status" value="1"/>
</dbReference>
<dbReference type="InterPro" id="IPR029062">
    <property type="entry name" value="Class_I_gatase-like"/>
</dbReference>
<dbReference type="InterPro" id="IPR017926">
    <property type="entry name" value="GATASE"/>
</dbReference>
<dbReference type="InterPro" id="IPR010139">
    <property type="entry name" value="Imidazole-glycPsynth_HisH"/>
</dbReference>
<dbReference type="NCBIfam" id="TIGR01855">
    <property type="entry name" value="IMP_synth_hisH"/>
    <property type="match status" value="1"/>
</dbReference>
<dbReference type="PANTHER" id="PTHR42701">
    <property type="entry name" value="IMIDAZOLE GLYCEROL PHOSPHATE SYNTHASE SUBUNIT HISH"/>
    <property type="match status" value="1"/>
</dbReference>
<dbReference type="PANTHER" id="PTHR42701:SF1">
    <property type="entry name" value="IMIDAZOLE GLYCEROL PHOSPHATE SYNTHASE SUBUNIT HISH"/>
    <property type="match status" value="1"/>
</dbReference>
<dbReference type="Pfam" id="PF00117">
    <property type="entry name" value="GATase"/>
    <property type="match status" value="1"/>
</dbReference>
<dbReference type="PIRSF" id="PIRSF000495">
    <property type="entry name" value="Amidotransf_hisH"/>
    <property type="match status" value="1"/>
</dbReference>
<dbReference type="SUPFAM" id="SSF52317">
    <property type="entry name" value="Class I glutamine amidotransferase-like"/>
    <property type="match status" value="1"/>
</dbReference>
<dbReference type="PROSITE" id="PS51273">
    <property type="entry name" value="GATASE_TYPE_1"/>
    <property type="match status" value="1"/>
</dbReference>
<proteinExistence type="inferred from homology"/>
<organism>
    <name type="scientific">Staphylococcus aureus (strain COL)</name>
    <dbReference type="NCBI Taxonomy" id="93062"/>
    <lineage>
        <taxon>Bacteria</taxon>
        <taxon>Bacillati</taxon>
        <taxon>Bacillota</taxon>
        <taxon>Bacilli</taxon>
        <taxon>Bacillales</taxon>
        <taxon>Staphylococcaceae</taxon>
        <taxon>Staphylococcus</taxon>
    </lineage>
</organism>
<sequence length="192" mass="21279">MIVIVDYGLGNISNVKRAIEHLGYEVVVSNTSKIIDQAETIILPGVGHFKDAMSEIKRLNLNAILAKNTDKKMIGICLGMQLMYEHSDEGDASGLGFIPGNISRIQTEYPVPHLGWNNLVSKHPMLNQDVYFVHSYQAPMSENVIAYAQYGADIPAIVQFNNYIGIQFHPEKSGTYGLQILRQAIQGGFIND</sequence>
<keyword id="KW-0028">Amino-acid biosynthesis</keyword>
<keyword id="KW-0963">Cytoplasm</keyword>
<keyword id="KW-0315">Glutamine amidotransferase</keyword>
<keyword id="KW-0368">Histidine biosynthesis</keyword>
<keyword id="KW-0378">Hydrolase</keyword>
<keyword id="KW-0456">Lyase</keyword>
<comment type="function">
    <text evidence="1">IGPS catalyzes the conversion of PRFAR and glutamine to IGP, AICAR and glutamate. The HisH subunit catalyzes the hydrolysis of glutamine to glutamate and ammonia as part of the synthesis of IGP and AICAR. The resulting ammonia molecule is channeled to the active site of HisF.</text>
</comment>
<comment type="catalytic activity">
    <reaction evidence="1">
        <text>5-[(5-phospho-1-deoxy-D-ribulos-1-ylimino)methylamino]-1-(5-phospho-beta-D-ribosyl)imidazole-4-carboxamide + L-glutamine = D-erythro-1-(imidazol-4-yl)glycerol 3-phosphate + 5-amino-1-(5-phospho-beta-D-ribosyl)imidazole-4-carboxamide + L-glutamate + H(+)</text>
        <dbReference type="Rhea" id="RHEA:24793"/>
        <dbReference type="ChEBI" id="CHEBI:15378"/>
        <dbReference type="ChEBI" id="CHEBI:29985"/>
        <dbReference type="ChEBI" id="CHEBI:58278"/>
        <dbReference type="ChEBI" id="CHEBI:58359"/>
        <dbReference type="ChEBI" id="CHEBI:58475"/>
        <dbReference type="ChEBI" id="CHEBI:58525"/>
        <dbReference type="EC" id="4.3.2.10"/>
    </reaction>
</comment>
<comment type="catalytic activity">
    <reaction evidence="1">
        <text>L-glutamine + H2O = L-glutamate + NH4(+)</text>
        <dbReference type="Rhea" id="RHEA:15889"/>
        <dbReference type="ChEBI" id="CHEBI:15377"/>
        <dbReference type="ChEBI" id="CHEBI:28938"/>
        <dbReference type="ChEBI" id="CHEBI:29985"/>
        <dbReference type="ChEBI" id="CHEBI:58359"/>
        <dbReference type="EC" id="3.5.1.2"/>
    </reaction>
</comment>
<comment type="pathway">
    <text evidence="1">Amino-acid biosynthesis; L-histidine biosynthesis; L-histidine from 5-phospho-alpha-D-ribose 1-diphosphate: step 5/9.</text>
</comment>
<comment type="subunit">
    <text evidence="1">Heterodimer of HisH and HisF.</text>
</comment>
<comment type="subcellular location">
    <subcellularLocation>
        <location evidence="1">Cytoplasm</location>
    </subcellularLocation>
</comment>
<name>HIS5_STAAC</name>
<reference key="1">
    <citation type="journal article" date="2005" name="J. Bacteriol.">
        <title>Insights on evolution of virulence and resistance from the complete genome analysis of an early methicillin-resistant Staphylococcus aureus strain and a biofilm-producing methicillin-resistant Staphylococcus epidermidis strain.</title>
        <authorList>
            <person name="Gill S.R."/>
            <person name="Fouts D.E."/>
            <person name="Archer G.L."/>
            <person name="Mongodin E.F."/>
            <person name="DeBoy R.T."/>
            <person name="Ravel J."/>
            <person name="Paulsen I.T."/>
            <person name="Kolonay J.F."/>
            <person name="Brinkac L.M."/>
            <person name="Beanan M.J."/>
            <person name="Dodson R.J."/>
            <person name="Daugherty S.C."/>
            <person name="Madupu R."/>
            <person name="Angiuoli S.V."/>
            <person name="Durkin A.S."/>
            <person name="Haft D.H."/>
            <person name="Vamathevan J.J."/>
            <person name="Khouri H."/>
            <person name="Utterback T.R."/>
            <person name="Lee C."/>
            <person name="Dimitrov G."/>
            <person name="Jiang L."/>
            <person name="Qin H."/>
            <person name="Weidman J."/>
            <person name="Tran K."/>
            <person name="Kang K.H."/>
            <person name="Hance I.R."/>
            <person name="Nelson K.E."/>
            <person name="Fraser C.M."/>
        </authorList>
    </citation>
    <scope>NUCLEOTIDE SEQUENCE [LARGE SCALE GENOMIC DNA]</scope>
    <source>
        <strain>COL</strain>
    </source>
</reference>
<evidence type="ECO:0000255" key="1">
    <source>
        <dbReference type="HAMAP-Rule" id="MF_00278"/>
    </source>
</evidence>